<feature type="chain" id="PRO_1000016113" description="Aspartyl/glutamyl-tRNA(Asn/Gln) amidotransferase subunit C">
    <location>
        <begin position="1"/>
        <end position="95"/>
    </location>
</feature>
<name>GATC_CYTH3</name>
<organism>
    <name type="scientific">Cytophaga hutchinsonii (strain ATCC 33406 / DSM 1761 / CIP 103989 / NBRC 15051 / NCIMB 9469 / D465)</name>
    <dbReference type="NCBI Taxonomy" id="269798"/>
    <lineage>
        <taxon>Bacteria</taxon>
        <taxon>Pseudomonadati</taxon>
        <taxon>Bacteroidota</taxon>
        <taxon>Cytophagia</taxon>
        <taxon>Cytophagales</taxon>
        <taxon>Cytophagaceae</taxon>
        <taxon>Cytophaga</taxon>
    </lineage>
</organism>
<reference key="1">
    <citation type="journal article" date="2007" name="Appl. Environ. Microbiol.">
        <title>Genome sequence of the cellulolytic gliding bacterium Cytophaga hutchinsonii.</title>
        <authorList>
            <person name="Xie G."/>
            <person name="Bruce D.C."/>
            <person name="Challacombe J.F."/>
            <person name="Chertkov O."/>
            <person name="Detter J.C."/>
            <person name="Gilna P."/>
            <person name="Han C.S."/>
            <person name="Lucas S."/>
            <person name="Misra M."/>
            <person name="Myers G.L."/>
            <person name="Richardson P."/>
            <person name="Tapia R."/>
            <person name="Thayer N."/>
            <person name="Thompson L.S."/>
            <person name="Brettin T.S."/>
            <person name="Henrissat B."/>
            <person name="Wilson D.B."/>
            <person name="McBride M.J."/>
        </authorList>
    </citation>
    <scope>NUCLEOTIDE SEQUENCE [LARGE SCALE GENOMIC DNA]</scope>
    <source>
        <strain>ATCC 33406 / DSM 1761 / JCM 20678 / CIP 103989 / IAM 12607 / NBRC 15051 / NCIMB 9469 / D465</strain>
    </source>
</reference>
<evidence type="ECO:0000255" key="1">
    <source>
        <dbReference type="HAMAP-Rule" id="MF_00122"/>
    </source>
</evidence>
<comment type="function">
    <text evidence="1">Allows the formation of correctly charged Asn-tRNA(Asn) or Gln-tRNA(Gln) through the transamidation of misacylated Asp-tRNA(Asn) or Glu-tRNA(Gln) in organisms which lack either or both of asparaginyl-tRNA or glutaminyl-tRNA synthetases. The reaction takes place in the presence of glutamine and ATP through an activated phospho-Asp-tRNA(Asn) or phospho-Glu-tRNA(Gln).</text>
</comment>
<comment type="catalytic activity">
    <reaction evidence="1">
        <text>L-glutamyl-tRNA(Gln) + L-glutamine + ATP + H2O = L-glutaminyl-tRNA(Gln) + L-glutamate + ADP + phosphate + H(+)</text>
        <dbReference type="Rhea" id="RHEA:17521"/>
        <dbReference type="Rhea" id="RHEA-COMP:9681"/>
        <dbReference type="Rhea" id="RHEA-COMP:9684"/>
        <dbReference type="ChEBI" id="CHEBI:15377"/>
        <dbReference type="ChEBI" id="CHEBI:15378"/>
        <dbReference type="ChEBI" id="CHEBI:29985"/>
        <dbReference type="ChEBI" id="CHEBI:30616"/>
        <dbReference type="ChEBI" id="CHEBI:43474"/>
        <dbReference type="ChEBI" id="CHEBI:58359"/>
        <dbReference type="ChEBI" id="CHEBI:78520"/>
        <dbReference type="ChEBI" id="CHEBI:78521"/>
        <dbReference type="ChEBI" id="CHEBI:456216"/>
    </reaction>
</comment>
<comment type="catalytic activity">
    <reaction evidence="1">
        <text>L-aspartyl-tRNA(Asn) + L-glutamine + ATP + H2O = L-asparaginyl-tRNA(Asn) + L-glutamate + ADP + phosphate + 2 H(+)</text>
        <dbReference type="Rhea" id="RHEA:14513"/>
        <dbReference type="Rhea" id="RHEA-COMP:9674"/>
        <dbReference type="Rhea" id="RHEA-COMP:9677"/>
        <dbReference type="ChEBI" id="CHEBI:15377"/>
        <dbReference type="ChEBI" id="CHEBI:15378"/>
        <dbReference type="ChEBI" id="CHEBI:29985"/>
        <dbReference type="ChEBI" id="CHEBI:30616"/>
        <dbReference type="ChEBI" id="CHEBI:43474"/>
        <dbReference type="ChEBI" id="CHEBI:58359"/>
        <dbReference type="ChEBI" id="CHEBI:78515"/>
        <dbReference type="ChEBI" id="CHEBI:78516"/>
        <dbReference type="ChEBI" id="CHEBI:456216"/>
    </reaction>
</comment>
<comment type="subunit">
    <text evidence="1">Heterotrimer of A, B and C subunits.</text>
</comment>
<comment type="similarity">
    <text evidence="1">Belongs to the GatC family.</text>
</comment>
<protein>
    <recommendedName>
        <fullName evidence="1">Aspartyl/glutamyl-tRNA(Asn/Gln) amidotransferase subunit C</fullName>
        <shortName evidence="1">Asp/Glu-ADT subunit C</shortName>
        <ecNumber evidence="1">6.3.5.-</ecNumber>
    </recommendedName>
</protein>
<accession>Q11R87</accession>
<gene>
    <name evidence="1" type="primary">gatC</name>
    <name type="ordered locus">CHU_2829</name>
</gene>
<sequence length="95" mass="10971">MSLDTKTIGKIAHLARLEFDDKSLEAFSTDFNKILSWIDKLNEVNTDNVEPLIHMSHELNVLREDIDKVTISHEEALKNAPKKDSDYFRVPKFLS</sequence>
<proteinExistence type="inferred from homology"/>
<keyword id="KW-0067">ATP-binding</keyword>
<keyword id="KW-0436">Ligase</keyword>
<keyword id="KW-0547">Nucleotide-binding</keyword>
<keyword id="KW-0648">Protein biosynthesis</keyword>
<keyword id="KW-1185">Reference proteome</keyword>
<dbReference type="EC" id="6.3.5.-" evidence="1"/>
<dbReference type="EMBL" id="CP000383">
    <property type="protein sequence ID" value="ABG60077.1"/>
    <property type="molecule type" value="Genomic_DNA"/>
</dbReference>
<dbReference type="RefSeq" id="WP_011586187.1">
    <property type="nucleotide sequence ID" value="NC_008255.1"/>
</dbReference>
<dbReference type="SMR" id="Q11R87"/>
<dbReference type="STRING" id="269798.CHU_2829"/>
<dbReference type="DNASU" id="4184193"/>
<dbReference type="KEGG" id="chu:CHU_2829"/>
<dbReference type="eggNOG" id="COG0721">
    <property type="taxonomic scope" value="Bacteria"/>
</dbReference>
<dbReference type="HOGENOM" id="CLU_105899_2_0_10"/>
<dbReference type="OrthoDB" id="9813938at2"/>
<dbReference type="Proteomes" id="UP000001822">
    <property type="component" value="Chromosome"/>
</dbReference>
<dbReference type="GO" id="GO:0050566">
    <property type="term" value="F:asparaginyl-tRNA synthase (glutamine-hydrolyzing) activity"/>
    <property type="evidence" value="ECO:0007669"/>
    <property type="project" value="RHEA"/>
</dbReference>
<dbReference type="GO" id="GO:0005524">
    <property type="term" value="F:ATP binding"/>
    <property type="evidence" value="ECO:0007669"/>
    <property type="project" value="UniProtKB-KW"/>
</dbReference>
<dbReference type="GO" id="GO:0050567">
    <property type="term" value="F:glutaminyl-tRNA synthase (glutamine-hydrolyzing) activity"/>
    <property type="evidence" value="ECO:0007669"/>
    <property type="project" value="UniProtKB-UniRule"/>
</dbReference>
<dbReference type="GO" id="GO:0070681">
    <property type="term" value="P:glutaminyl-tRNAGln biosynthesis via transamidation"/>
    <property type="evidence" value="ECO:0007669"/>
    <property type="project" value="TreeGrafter"/>
</dbReference>
<dbReference type="GO" id="GO:0006450">
    <property type="term" value="P:regulation of translational fidelity"/>
    <property type="evidence" value="ECO:0007669"/>
    <property type="project" value="InterPro"/>
</dbReference>
<dbReference type="GO" id="GO:0006412">
    <property type="term" value="P:translation"/>
    <property type="evidence" value="ECO:0007669"/>
    <property type="project" value="UniProtKB-UniRule"/>
</dbReference>
<dbReference type="Gene3D" id="1.10.20.60">
    <property type="entry name" value="Glu-tRNAGln amidotransferase C subunit, N-terminal domain"/>
    <property type="match status" value="1"/>
</dbReference>
<dbReference type="HAMAP" id="MF_00122">
    <property type="entry name" value="GatC"/>
    <property type="match status" value="1"/>
</dbReference>
<dbReference type="InterPro" id="IPR036113">
    <property type="entry name" value="Asp/Glu-ADT_sf_sub_c"/>
</dbReference>
<dbReference type="InterPro" id="IPR003837">
    <property type="entry name" value="GatC"/>
</dbReference>
<dbReference type="NCBIfam" id="TIGR00135">
    <property type="entry name" value="gatC"/>
    <property type="match status" value="1"/>
</dbReference>
<dbReference type="PANTHER" id="PTHR15004">
    <property type="entry name" value="GLUTAMYL-TRNA(GLN) AMIDOTRANSFERASE SUBUNIT C, MITOCHONDRIAL"/>
    <property type="match status" value="1"/>
</dbReference>
<dbReference type="PANTHER" id="PTHR15004:SF0">
    <property type="entry name" value="GLUTAMYL-TRNA(GLN) AMIDOTRANSFERASE SUBUNIT C, MITOCHONDRIAL"/>
    <property type="match status" value="1"/>
</dbReference>
<dbReference type="Pfam" id="PF02686">
    <property type="entry name" value="GatC"/>
    <property type="match status" value="1"/>
</dbReference>
<dbReference type="SUPFAM" id="SSF141000">
    <property type="entry name" value="Glu-tRNAGln amidotransferase C subunit"/>
    <property type="match status" value="1"/>
</dbReference>